<organism>
    <name type="scientific">Canis lupus familiaris</name>
    <name type="common">Dog</name>
    <name type="synonym">Canis familiaris</name>
    <dbReference type="NCBI Taxonomy" id="9615"/>
    <lineage>
        <taxon>Eukaryota</taxon>
        <taxon>Metazoa</taxon>
        <taxon>Chordata</taxon>
        <taxon>Craniata</taxon>
        <taxon>Vertebrata</taxon>
        <taxon>Euteleostomi</taxon>
        <taxon>Mammalia</taxon>
        <taxon>Eutheria</taxon>
        <taxon>Laurasiatheria</taxon>
        <taxon>Carnivora</taxon>
        <taxon>Caniformia</taxon>
        <taxon>Canidae</taxon>
        <taxon>Canis</taxon>
    </lineage>
</organism>
<dbReference type="EMBL" id="DQ487185">
    <property type="protein sequence ID" value="ABF48488.1"/>
    <property type="molecule type" value="mRNA"/>
</dbReference>
<dbReference type="EMBL" id="DQ487186">
    <property type="protein sequence ID" value="ABF48489.1"/>
    <property type="molecule type" value="mRNA"/>
</dbReference>
<dbReference type="EMBL" id="DQ487187">
    <property type="protein sequence ID" value="ABF48490.1"/>
    <property type="molecule type" value="mRNA"/>
</dbReference>
<dbReference type="RefSeq" id="NP_001041586.1">
    <molecule id="Q1HGE8-1"/>
    <property type="nucleotide sequence ID" value="NM_001048121.1"/>
</dbReference>
<dbReference type="SMR" id="Q1HGE8"/>
<dbReference type="FunCoup" id="Q1HGE8">
    <property type="interactions" value="2"/>
</dbReference>
<dbReference type="STRING" id="9615.ENSCAFP00000030227"/>
<dbReference type="PaxDb" id="9612-ENSCAFP00000030227"/>
<dbReference type="Ensembl" id="ENSCAFT00000002449.5">
    <molecule id="Q1HGE8-3"/>
    <property type="protein sequence ID" value="ENSCAFP00000002269.5"/>
    <property type="gene ID" value="ENSCAFG00000020379.6"/>
</dbReference>
<dbReference type="Ensembl" id="ENSCAFT00000032457.6">
    <molecule id="Q1HGE8-1"/>
    <property type="protein sequence ID" value="ENSCAFP00000030227.4"/>
    <property type="gene ID" value="ENSCAFG00000020379.6"/>
</dbReference>
<dbReference type="Ensembl" id="ENSCAFT00030018436.1">
    <molecule id="Q1HGE8-1"/>
    <property type="protein sequence ID" value="ENSCAFP00030016096.1"/>
    <property type="gene ID" value="ENSCAFG00030009600.1"/>
</dbReference>
<dbReference type="Ensembl" id="ENSCAFT00030018468.1">
    <molecule id="Q1HGE8-3"/>
    <property type="protein sequence ID" value="ENSCAFP00030016124.1"/>
    <property type="gene ID" value="ENSCAFG00030009600.1"/>
</dbReference>
<dbReference type="Ensembl" id="ENSCAFT00040034244.1">
    <molecule id="Q1HGE8-1"/>
    <property type="protein sequence ID" value="ENSCAFP00040029812.1"/>
    <property type="gene ID" value="ENSCAFG00040018221.1"/>
</dbReference>
<dbReference type="Ensembl" id="ENSCAFT00040034273.1">
    <molecule id="Q1HGE8-3"/>
    <property type="protein sequence ID" value="ENSCAFP00040029836.1"/>
    <property type="gene ID" value="ENSCAFG00040018221.1"/>
</dbReference>
<dbReference type="Ensembl" id="ENSCAFT00845017857.1">
    <molecule id="Q1HGE8-1"/>
    <property type="protein sequence ID" value="ENSCAFP00845013908.1"/>
    <property type="gene ID" value="ENSCAFG00845010066.1"/>
</dbReference>
<dbReference type="Ensembl" id="ENSCAFT00845017932.1">
    <molecule id="Q1HGE8-3"/>
    <property type="protein sequence ID" value="ENSCAFP00845013968.1"/>
    <property type="gene ID" value="ENSCAFG00845010066.1"/>
</dbReference>
<dbReference type="GeneID" id="489766"/>
<dbReference type="KEGG" id="cfa:489766"/>
<dbReference type="CTD" id="3299"/>
<dbReference type="VEuPathDB" id="HostDB:ENSCAFG00845010066"/>
<dbReference type="eggNOG" id="KOG0627">
    <property type="taxonomic scope" value="Eukaryota"/>
</dbReference>
<dbReference type="GeneTree" id="ENSGT00940000158063"/>
<dbReference type="InParanoid" id="Q1HGE8"/>
<dbReference type="OrthoDB" id="60033at2759"/>
<dbReference type="Proteomes" id="UP000002254">
    <property type="component" value="Chromosome 5"/>
</dbReference>
<dbReference type="Proteomes" id="UP000694429">
    <property type="component" value="Chromosome 5"/>
</dbReference>
<dbReference type="Proteomes" id="UP000694542">
    <property type="component" value="Chromosome 5"/>
</dbReference>
<dbReference type="Proteomes" id="UP000805418">
    <property type="component" value="Chromosome 5"/>
</dbReference>
<dbReference type="Bgee" id="ENSCAFG00000020379">
    <property type="expression patterns" value="Expressed in temporal lobe and 46 other cell types or tissues"/>
</dbReference>
<dbReference type="GO" id="GO:0000785">
    <property type="term" value="C:chromatin"/>
    <property type="evidence" value="ECO:0007669"/>
    <property type="project" value="Ensembl"/>
</dbReference>
<dbReference type="GO" id="GO:0016607">
    <property type="term" value="C:nuclear speck"/>
    <property type="evidence" value="ECO:0007669"/>
    <property type="project" value="Ensembl"/>
</dbReference>
<dbReference type="GO" id="GO:0000981">
    <property type="term" value="F:DNA-binding transcription factor activity, RNA polymerase II-specific"/>
    <property type="evidence" value="ECO:0007669"/>
    <property type="project" value="Ensembl"/>
</dbReference>
<dbReference type="GO" id="GO:0000978">
    <property type="term" value="F:RNA polymerase II cis-regulatory region sequence-specific DNA binding"/>
    <property type="evidence" value="ECO:0007669"/>
    <property type="project" value="Ensembl"/>
</dbReference>
<dbReference type="GO" id="GO:0070306">
    <property type="term" value="P:lens fiber cell differentiation"/>
    <property type="evidence" value="ECO:0000250"/>
    <property type="project" value="UniProtKB"/>
</dbReference>
<dbReference type="GO" id="GO:0000122">
    <property type="term" value="P:negative regulation of transcription by RNA polymerase II"/>
    <property type="evidence" value="ECO:0007669"/>
    <property type="project" value="Ensembl"/>
</dbReference>
<dbReference type="FunFam" id="1.10.10.10:FF:000027">
    <property type="entry name" value="Heat shock transcription factor 1"/>
    <property type="match status" value="1"/>
</dbReference>
<dbReference type="Gene3D" id="1.10.10.10">
    <property type="entry name" value="Winged helix-like DNA-binding domain superfamily/Winged helix DNA-binding domain"/>
    <property type="match status" value="1"/>
</dbReference>
<dbReference type="InterPro" id="IPR000232">
    <property type="entry name" value="HSF_DNA-bd"/>
</dbReference>
<dbReference type="InterPro" id="IPR036388">
    <property type="entry name" value="WH-like_DNA-bd_sf"/>
</dbReference>
<dbReference type="InterPro" id="IPR036390">
    <property type="entry name" value="WH_DNA-bd_sf"/>
</dbReference>
<dbReference type="PANTHER" id="PTHR10015:SF213">
    <property type="entry name" value="HEAT SHOCK FACTOR PROTEIN 4"/>
    <property type="match status" value="1"/>
</dbReference>
<dbReference type="PANTHER" id="PTHR10015">
    <property type="entry name" value="HEAT SHOCK TRANSCRIPTION FACTOR"/>
    <property type="match status" value="1"/>
</dbReference>
<dbReference type="Pfam" id="PF00447">
    <property type="entry name" value="HSF_DNA-bind"/>
    <property type="match status" value="1"/>
</dbReference>
<dbReference type="PRINTS" id="PR00056">
    <property type="entry name" value="HSFDOMAIN"/>
</dbReference>
<dbReference type="SMART" id="SM00415">
    <property type="entry name" value="HSF"/>
    <property type="match status" value="1"/>
</dbReference>
<dbReference type="SUPFAM" id="SSF46785">
    <property type="entry name" value="Winged helix' DNA-binding domain"/>
    <property type="match status" value="1"/>
</dbReference>
<dbReference type="PROSITE" id="PS00434">
    <property type="entry name" value="HSF_DOMAIN"/>
    <property type="match status" value="1"/>
</dbReference>
<gene>
    <name type="primary">HSF4</name>
</gene>
<feature type="chain" id="PRO_0000260264" description="Heat shock factor protein 4">
    <location>
        <begin position="1"/>
        <end position="492"/>
    </location>
</feature>
<feature type="DNA-binding region" evidence="1">
    <location>
        <begin position="17"/>
        <end position="121"/>
    </location>
</feature>
<feature type="region of interest" description="Hydrophobic repeat HR-A/B">
    <location>
        <begin position="129"/>
        <end position="203"/>
    </location>
</feature>
<feature type="region of interest" description="Interactions with DUSP26, MAPK1 and MAPK2" evidence="1">
    <location>
        <begin position="245"/>
        <end position="323"/>
    </location>
</feature>
<feature type="region of interest" description="Disordered" evidence="5">
    <location>
        <begin position="250"/>
        <end position="286"/>
    </location>
</feature>
<feature type="region of interest" description="Disordered" evidence="5">
    <location>
        <begin position="337"/>
        <end position="378"/>
    </location>
</feature>
<feature type="region of interest" description="Hydrophobic repeat HR-C">
    <location>
        <begin position="365"/>
        <end position="390"/>
    </location>
</feature>
<feature type="modified residue" description="Phosphoserine" evidence="4">
    <location>
        <position position="299"/>
    </location>
</feature>
<feature type="cross-link" description="Glycyl lysine isopeptide (Lys-Gly) (interchain with G-Cter in SUMO)" evidence="1">
    <location>
        <position position="294"/>
    </location>
</feature>
<feature type="splice variant" id="VSP_021591" description="In isoform c." evidence="6">
    <location>
        <begin position="287"/>
        <end position="362"/>
    </location>
</feature>
<feature type="splice variant" id="VSP_021592" description="In isoform b." evidence="6">
    <location>
        <begin position="287"/>
        <end position="320"/>
    </location>
</feature>
<accession>Q1HGE8</accession>
<accession>Q1HGE6</accession>
<accession>Q1HGE7</accession>
<protein>
    <recommendedName>
        <fullName>Heat shock factor protein 4</fullName>
        <shortName>HSF 4</shortName>
    </recommendedName>
    <alternativeName>
        <fullName>Heat shock transcription factor 4</fullName>
        <shortName>HSTF 4</shortName>
    </alternativeName>
</protein>
<evidence type="ECO:0000250" key="1"/>
<evidence type="ECO:0000250" key="2">
    <source>
        <dbReference type="UniProtKB" id="Q5CZP2"/>
    </source>
</evidence>
<evidence type="ECO:0000250" key="3">
    <source>
        <dbReference type="UniProtKB" id="Q9R0L1"/>
    </source>
</evidence>
<evidence type="ECO:0000250" key="4">
    <source>
        <dbReference type="UniProtKB" id="Q9ULV5"/>
    </source>
</evidence>
<evidence type="ECO:0000256" key="5">
    <source>
        <dbReference type="SAM" id="MobiDB-lite"/>
    </source>
</evidence>
<evidence type="ECO:0000303" key="6">
    <source>
    </source>
</evidence>
<evidence type="ECO:0000305" key="7"/>
<sequence length="492" mass="53064">MQEAPAALPTEPGPSPVPAFLGKLWALVGDPGTDHLIRWSPSGTSFLVSDQSRFAKEVLPQYFKHSNMASFVRQLNMYGFRKVVSIEQGGLLRPERDHVEFQHPSFVRGREQLLERVRRKVPALRSDDGRWRPEDLGRLLGEVQALRGVQEITEARLRELRQQNEILWREVVTLRQSHGQQHRVIGKLIQCLFGPLQTGSSGAGAKRKLSLMLDEGSSCPTPAKFNTCPLPGALLQDPYFIQSPLPETTLGLSSSHRTRGPIISDIHEDSPSPDGTRLSPSSGGRREKGLALLKEEPASPGGEGEAGLALAPNECDFCVTAPPPLSVAVVQAILEGKGNFSPEGPRNAQQPEPRGPREVPDRGTLGLDRGARSPENLLPPMLLRAPPESVEPAGPLDVLGPSHQGREWTLMDLDMELSLMQPLGPERSETELAVKGLNSPGPGKDSTLGAPLLLDVQAALGGPALSLPGALTIYSTPESRANYLGPGANPSP</sequence>
<proteinExistence type="evidence at transcript level"/>
<name>HSF4_CANLF</name>
<comment type="function">
    <text evidence="2 3 4">Heat-shock transcription factor that specifically binds heat shock promoter elements (HSE) (By similarity). Required for denucleation and organelle rupture and degradation that occur during eye lens terminal differentiation, when fiber cells that compose the lens degrade all membrane-bound organelles in order to provide lens with transparency to allow the passage of light (By similarity). In this process, may regulate denucleation of lens fiber cells in part by activating DNASE2B transcription (By similarity). May be involved in DNA repair through the transcriptional regulation of RAD51 (By similarity). May up-regulate p53/TP53 protein in eye lens fiber cells, possibly through protein stabilization (By similarity). In the eye lens, controls the expression of alpha-crystallin B chain/CRYAB and consequently may be involved in the regulation of lysosomal acidification (By similarity).</text>
</comment>
<comment type="subunit">
    <text evidence="1 4">Homotrimer. Exhibits constitutive DNA binding and forms trimers even in the absence of stress. Interacts with ALKBH4, DUSP26, MAPK1, MAPK2, MAPK8 and MAP kinase p38.</text>
</comment>
<comment type="subcellular location">
    <subcellularLocation>
        <location evidence="4">Nucleus</location>
    </subcellularLocation>
</comment>
<comment type="alternative products">
    <event type="alternative splicing"/>
    <isoform>
        <id>Q1HGE8-1</id>
        <name>a</name>
        <sequence type="displayed"/>
    </isoform>
    <isoform>
        <id>Q1HGE8-2</id>
        <name>b</name>
        <sequence type="described" ref="VSP_021592"/>
    </isoform>
    <isoform>
        <id>Q1HGE8-3</id>
        <name>c</name>
        <sequence type="described" ref="VSP_021591"/>
    </isoform>
</comment>
<comment type="PTM">
    <text evidence="1">Phosphorylated mainly on serine residues. Phosphorylation on Ser-299 promotes sumoylation on Lys-294 (By similarity).</text>
</comment>
<comment type="PTM">
    <text evidence="1">Constitutively sumoylated. Sumoylation represses the transcriptional activity and is promoted by phosphorylation on Ser-299 (By similarity).</text>
</comment>
<comment type="disease">
    <text>Defects in HSF4 are a cause of forms of hereditary cataract (HC) in dogs. Mutations in HSF4 seem to be causing a recessive form of cataract in Staffordshire Bull terriers and Boston terriers and a dominant cataract in Australian shepherds.</text>
</comment>
<comment type="similarity">
    <text evidence="7">Belongs to the HSF family.</text>
</comment>
<reference key="1">
    <citation type="journal article" date="2006" name="Vet. Ophthalmol.">
        <title>Identification of mutations in HSF4 in dogs of three different breeds with hereditary cataracts.</title>
        <authorList>
            <person name="Mellersh C.S."/>
            <person name="Pettitt L."/>
            <person name="Forman O.P."/>
            <person name="Vaudin M."/>
            <person name="Barnett K.C."/>
        </authorList>
    </citation>
    <scope>NUCLEOTIDE SEQUENCE [MRNA] (ISOFORMS A; B AND C)</scope>
    <scope>INVOLVEMENT IN CATARACT</scope>
</reference>
<keyword id="KW-0025">Alternative splicing</keyword>
<keyword id="KW-0238">DNA-binding</keyword>
<keyword id="KW-1017">Isopeptide bond</keyword>
<keyword id="KW-0539">Nucleus</keyword>
<keyword id="KW-0597">Phosphoprotein</keyword>
<keyword id="KW-1185">Reference proteome</keyword>
<keyword id="KW-0346">Stress response</keyword>
<keyword id="KW-0804">Transcription</keyword>
<keyword id="KW-0805">Transcription regulation</keyword>
<keyword id="KW-0832">Ubl conjugation</keyword>